<dbReference type="EC" id="6.1.1.22" evidence="1"/>
<dbReference type="EMBL" id="BA000017">
    <property type="protein sequence ID" value="BAB57616.1"/>
    <property type="molecule type" value="Genomic_DNA"/>
</dbReference>
<dbReference type="RefSeq" id="WP_000858779.1">
    <property type="nucleotide sequence ID" value="NC_002758.2"/>
</dbReference>
<dbReference type="SMR" id="P67571"/>
<dbReference type="KEGG" id="sav:SAV1454"/>
<dbReference type="HOGENOM" id="CLU_004553_2_0_9"/>
<dbReference type="PhylomeDB" id="P67571"/>
<dbReference type="Proteomes" id="UP000002481">
    <property type="component" value="Chromosome"/>
</dbReference>
<dbReference type="GO" id="GO:0005737">
    <property type="term" value="C:cytoplasm"/>
    <property type="evidence" value="ECO:0007669"/>
    <property type="project" value="UniProtKB-SubCell"/>
</dbReference>
<dbReference type="GO" id="GO:0004816">
    <property type="term" value="F:asparagine-tRNA ligase activity"/>
    <property type="evidence" value="ECO:0007669"/>
    <property type="project" value="UniProtKB-UniRule"/>
</dbReference>
<dbReference type="GO" id="GO:0005524">
    <property type="term" value="F:ATP binding"/>
    <property type="evidence" value="ECO:0007669"/>
    <property type="project" value="UniProtKB-UniRule"/>
</dbReference>
<dbReference type="GO" id="GO:0140096">
    <property type="term" value="F:catalytic activity, acting on a protein"/>
    <property type="evidence" value="ECO:0007669"/>
    <property type="project" value="UniProtKB-ARBA"/>
</dbReference>
<dbReference type="GO" id="GO:0003676">
    <property type="term" value="F:nucleic acid binding"/>
    <property type="evidence" value="ECO:0007669"/>
    <property type="project" value="InterPro"/>
</dbReference>
<dbReference type="GO" id="GO:0016740">
    <property type="term" value="F:transferase activity"/>
    <property type="evidence" value="ECO:0007669"/>
    <property type="project" value="UniProtKB-ARBA"/>
</dbReference>
<dbReference type="GO" id="GO:0006421">
    <property type="term" value="P:asparaginyl-tRNA aminoacylation"/>
    <property type="evidence" value="ECO:0007669"/>
    <property type="project" value="UniProtKB-UniRule"/>
</dbReference>
<dbReference type="CDD" id="cd04323">
    <property type="entry name" value="AsnRS_cyto_like_N"/>
    <property type="match status" value="1"/>
</dbReference>
<dbReference type="CDD" id="cd00776">
    <property type="entry name" value="AsxRS_core"/>
    <property type="match status" value="1"/>
</dbReference>
<dbReference type="Gene3D" id="3.30.930.10">
    <property type="entry name" value="Bira Bifunctional Protein, Domain 2"/>
    <property type="match status" value="1"/>
</dbReference>
<dbReference type="Gene3D" id="2.40.50.140">
    <property type="entry name" value="Nucleic acid-binding proteins"/>
    <property type="match status" value="1"/>
</dbReference>
<dbReference type="HAMAP" id="MF_00534">
    <property type="entry name" value="Asn_tRNA_synth"/>
    <property type="match status" value="1"/>
</dbReference>
<dbReference type="InterPro" id="IPR004364">
    <property type="entry name" value="Aa-tRNA-synt_II"/>
</dbReference>
<dbReference type="InterPro" id="IPR006195">
    <property type="entry name" value="aa-tRNA-synth_II"/>
</dbReference>
<dbReference type="InterPro" id="IPR045864">
    <property type="entry name" value="aa-tRNA-synth_II/BPL/LPL"/>
</dbReference>
<dbReference type="InterPro" id="IPR004522">
    <property type="entry name" value="Asn-tRNA-ligase"/>
</dbReference>
<dbReference type="InterPro" id="IPR002312">
    <property type="entry name" value="Asp/Asn-tRNA-synth_IIb"/>
</dbReference>
<dbReference type="InterPro" id="IPR012340">
    <property type="entry name" value="NA-bd_OB-fold"/>
</dbReference>
<dbReference type="InterPro" id="IPR004365">
    <property type="entry name" value="NA-bd_OB_tRNA"/>
</dbReference>
<dbReference type="NCBIfam" id="TIGR00457">
    <property type="entry name" value="asnS"/>
    <property type="match status" value="1"/>
</dbReference>
<dbReference type="NCBIfam" id="NF003037">
    <property type="entry name" value="PRK03932.1"/>
    <property type="match status" value="1"/>
</dbReference>
<dbReference type="NCBIfam" id="NF003483">
    <property type="entry name" value="PRK05159.1"/>
    <property type="match status" value="1"/>
</dbReference>
<dbReference type="PANTHER" id="PTHR22594:SF34">
    <property type="entry name" value="ASPARAGINE--TRNA LIGASE, MITOCHONDRIAL-RELATED"/>
    <property type="match status" value="1"/>
</dbReference>
<dbReference type="PANTHER" id="PTHR22594">
    <property type="entry name" value="ASPARTYL/LYSYL-TRNA SYNTHETASE"/>
    <property type="match status" value="1"/>
</dbReference>
<dbReference type="Pfam" id="PF00152">
    <property type="entry name" value="tRNA-synt_2"/>
    <property type="match status" value="1"/>
</dbReference>
<dbReference type="Pfam" id="PF01336">
    <property type="entry name" value="tRNA_anti-codon"/>
    <property type="match status" value="1"/>
</dbReference>
<dbReference type="PRINTS" id="PR01042">
    <property type="entry name" value="TRNASYNTHASP"/>
</dbReference>
<dbReference type="SUPFAM" id="SSF55681">
    <property type="entry name" value="Class II aaRS and biotin synthetases"/>
    <property type="match status" value="1"/>
</dbReference>
<dbReference type="SUPFAM" id="SSF50249">
    <property type="entry name" value="Nucleic acid-binding proteins"/>
    <property type="match status" value="1"/>
</dbReference>
<dbReference type="PROSITE" id="PS50862">
    <property type="entry name" value="AA_TRNA_LIGASE_II"/>
    <property type="match status" value="1"/>
</dbReference>
<name>SYN_STAAM</name>
<proteinExistence type="inferred from homology"/>
<organism>
    <name type="scientific">Staphylococcus aureus (strain Mu50 / ATCC 700699)</name>
    <dbReference type="NCBI Taxonomy" id="158878"/>
    <lineage>
        <taxon>Bacteria</taxon>
        <taxon>Bacillati</taxon>
        <taxon>Bacillota</taxon>
        <taxon>Bacilli</taxon>
        <taxon>Bacillales</taxon>
        <taxon>Staphylococcaceae</taxon>
        <taxon>Staphylococcus</taxon>
    </lineage>
</organism>
<keyword id="KW-0030">Aminoacyl-tRNA synthetase</keyword>
<keyword id="KW-0067">ATP-binding</keyword>
<keyword id="KW-0963">Cytoplasm</keyword>
<keyword id="KW-0436">Ligase</keyword>
<keyword id="KW-0547">Nucleotide-binding</keyword>
<keyword id="KW-0648">Protein biosynthesis</keyword>
<sequence>MKTTIKQAKDHLNQDVTIGAWLTNKRSSGKIAFLQLRDGTGFMQGVVVKSEVDEEVFKLAKEIAQESSLYVTGTITEDNRSDLGYEMQVKSIEVISEAHDYPITPKNHGTEFLMDHRHLWLRSKKQHAVMKIRNEVIRATYEFFNKDGFTKVDPPILTASAPEGTSELFHTKYFDQDAFLSQSGQLYLEAAAMAHGKVFSFGPTFRAEKSKTRRHLIEFWMIEGEMAFTNHAESLEIQEQYVTHVVKSVLENCKLELKILERDTSKLEKVATPFPRISYDDAIEFLKAEGFDDIEWGEDFGAPHETAIANHYDLPVFITNYPTKIKPFYMQPNPENEETVLCADLIAPEGYGEIIGGSERVDDLELLEQRVKEHGLDEEAYSYYLDLRRYGSVPHCGFGLGLERTVAWISGVEHVRETAPFPRLLNRLYP</sequence>
<comment type="catalytic activity">
    <reaction evidence="1">
        <text>tRNA(Asn) + L-asparagine + ATP = L-asparaginyl-tRNA(Asn) + AMP + diphosphate + H(+)</text>
        <dbReference type="Rhea" id="RHEA:11180"/>
        <dbReference type="Rhea" id="RHEA-COMP:9659"/>
        <dbReference type="Rhea" id="RHEA-COMP:9674"/>
        <dbReference type="ChEBI" id="CHEBI:15378"/>
        <dbReference type="ChEBI" id="CHEBI:30616"/>
        <dbReference type="ChEBI" id="CHEBI:33019"/>
        <dbReference type="ChEBI" id="CHEBI:58048"/>
        <dbReference type="ChEBI" id="CHEBI:78442"/>
        <dbReference type="ChEBI" id="CHEBI:78515"/>
        <dbReference type="ChEBI" id="CHEBI:456215"/>
        <dbReference type="EC" id="6.1.1.22"/>
    </reaction>
</comment>
<comment type="subunit">
    <text evidence="1">Homodimer.</text>
</comment>
<comment type="subcellular location">
    <subcellularLocation>
        <location evidence="1">Cytoplasm</location>
    </subcellularLocation>
</comment>
<comment type="similarity">
    <text evidence="1">Belongs to the class-II aminoacyl-tRNA synthetase family.</text>
</comment>
<reference key="1">
    <citation type="journal article" date="2001" name="Lancet">
        <title>Whole genome sequencing of meticillin-resistant Staphylococcus aureus.</title>
        <authorList>
            <person name="Kuroda M."/>
            <person name="Ohta T."/>
            <person name="Uchiyama I."/>
            <person name="Baba T."/>
            <person name="Yuzawa H."/>
            <person name="Kobayashi I."/>
            <person name="Cui L."/>
            <person name="Oguchi A."/>
            <person name="Aoki K."/>
            <person name="Nagai Y."/>
            <person name="Lian J.-Q."/>
            <person name="Ito T."/>
            <person name="Kanamori M."/>
            <person name="Matsumaru H."/>
            <person name="Maruyama A."/>
            <person name="Murakami H."/>
            <person name="Hosoyama A."/>
            <person name="Mizutani-Ui Y."/>
            <person name="Takahashi N.K."/>
            <person name="Sawano T."/>
            <person name="Inoue R."/>
            <person name="Kaito C."/>
            <person name="Sekimizu K."/>
            <person name="Hirakawa H."/>
            <person name="Kuhara S."/>
            <person name="Goto S."/>
            <person name="Yabuzaki J."/>
            <person name="Kanehisa M."/>
            <person name="Yamashita A."/>
            <person name="Oshima K."/>
            <person name="Furuya K."/>
            <person name="Yoshino C."/>
            <person name="Shiba T."/>
            <person name="Hattori M."/>
            <person name="Ogasawara N."/>
            <person name="Hayashi H."/>
            <person name="Hiramatsu K."/>
        </authorList>
    </citation>
    <scope>NUCLEOTIDE SEQUENCE [LARGE SCALE GENOMIC DNA]</scope>
    <source>
        <strain>Mu50 / ATCC 700699</strain>
    </source>
</reference>
<protein>
    <recommendedName>
        <fullName evidence="1">Asparagine--tRNA ligase</fullName>
        <ecNumber evidence="1">6.1.1.22</ecNumber>
    </recommendedName>
    <alternativeName>
        <fullName evidence="1">Asparaginyl-tRNA synthetase</fullName>
        <shortName evidence="1">AsnRS</shortName>
    </alternativeName>
</protein>
<gene>
    <name evidence="1" type="primary">asnS</name>
    <name type="ordered locus">SAV1454</name>
</gene>
<evidence type="ECO:0000255" key="1">
    <source>
        <dbReference type="HAMAP-Rule" id="MF_00534"/>
    </source>
</evidence>
<accession>P67571</accession>
<accession>Q99U35</accession>
<feature type="chain" id="PRO_0000176448" description="Asparagine--tRNA ligase">
    <location>
        <begin position="1"/>
        <end position="430"/>
    </location>
</feature>